<dbReference type="EMBL" id="CP000720">
    <property type="protein sequence ID" value="ABS47153.1"/>
    <property type="molecule type" value="Genomic_DNA"/>
</dbReference>
<dbReference type="RefSeq" id="WP_011193139.1">
    <property type="nucleotide sequence ID" value="NC_009708.1"/>
</dbReference>
<dbReference type="SMR" id="A7FDY8"/>
<dbReference type="GeneID" id="96662986"/>
<dbReference type="KEGG" id="ypi:YpsIP31758_0473"/>
<dbReference type="HOGENOM" id="CLU_080999_3_1_6"/>
<dbReference type="Proteomes" id="UP000002412">
    <property type="component" value="Chromosome"/>
</dbReference>
<dbReference type="GO" id="GO:0097367">
    <property type="term" value="F:carbohydrate derivative binding"/>
    <property type="evidence" value="ECO:0007669"/>
    <property type="project" value="InterPro"/>
</dbReference>
<dbReference type="GO" id="GO:1901135">
    <property type="term" value="P:carbohydrate derivative metabolic process"/>
    <property type="evidence" value="ECO:0007669"/>
    <property type="project" value="InterPro"/>
</dbReference>
<dbReference type="GO" id="GO:0006260">
    <property type="term" value="P:DNA replication"/>
    <property type="evidence" value="ECO:0007669"/>
    <property type="project" value="UniProtKB-UniRule"/>
</dbReference>
<dbReference type="CDD" id="cd05006">
    <property type="entry name" value="SIS_GmhA"/>
    <property type="match status" value="1"/>
</dbReference>
<dbReference type="FunFam" id="3.40.50.10490:FF:000006">
    <property type="entry name" value="DnaA initiator-associating protein DiaA"/>
    <property type="match status" value="1"/>
</dbReference>
<dbReference type="Gene3D" id="3.40.50.10490">
    <property type="entry name" value="Glucose-6-phosphate isomerase like protein, domain 1"/>
    <property type="match status" value="1"/>
</dbReference>
<dbReference type="HAMAP" id="MF_01157">
    <property type="entry name" value="SIS_DiaA"/>
    <property type="match status" value="1"/>
</dbReference>
<dbReference type="InterPro" id="IPR023070">
    <property type="entry name" value="DiaA"/>
</dbReference>
<dbReference type="InterPro" id="IPR035461">
    <property type="entry name" value="GmhA/DiaA"/>
</dbReference>
<dbReference type="InterPro" id="IPR001347">
    <property type="entry name" value="SIS_dom"/>
</dbReference>
<dbReference type="InterPro" id="IPR046348">
    <property type="entry name" value="SIS_dom_sf"/>
</dbReference>
<dbReference type="InterPro" id="IPR050099">
    <property type="entry name" value="SIS_GmhA/DiaA_subfam"/>
</dbReference>
<dbReference type="NCBIfam" id="NF008138">
    <property type="entry name" value="PRK10886.1"/>
    <property type="match status" value="1"/>
</dbReference>
<dbReference type="PANTHER" id="PTHR30390:SF6">
    <property type="entry name" value="DNAA INITIATOR-ASSOCIATING PROTEIN DIAA"/>
    <property type="match status" value="1"/>
</dbReference>
<dbReference type="PANTHER" id="PTHR30390">
    <property type="entry name" value="SEDOHEPTULOSE 7-PHOSPHATE ISOMERASE / DNAA INITIATOR-ASSOCIATING FACTOR FOR REPLICATION INITIATION"/>
    <property type="match status" value="1"/>
</dbReference>
<dbReference type="Pfam" id="PF13580">
    <property type="entry name" value="SIS_2"/>
    <property type="match status" value="1"/>
</dbReference>
<dbReference type="SUPFAM" id="SSF53697">
    <property type="entry name" value="SIS domain"/>
    <property type="match status" value="1"/>
</dbReference>
<dbReference type="PROSITE" id="PS51464">
    <property type="entry name" value="SIS"/>
    <property type="match status" value="1"/>
</dbReference>
<gene>
    <name evidence="1" type="primary">diaA</name>
    <name type="ordered locus">YpsIP31758_0473</name>
</gene>
<reference key="1">
    <citation type="journal article" date="2007" name="PLoS Genet.">
        <title>The complete genome sequence of Yersinia pseudotuberculosis IP31758, the causative agent of Far East scarlet-like fever.</title>
        <authorList>
            <person name="Eppinger M."/>
            <person name="Rosovitz M.J."/>
            <person name="Fricke W.F."/>
            <person name="Rasko D.A."/>
            <person name="Kokorina G."/>
            <person name="Fayolle C."/>
            <person name="Lindler L.E."/>
            <person name="Carniel E."/>
            <person name="Ravel J."/>
        </authorList>
    </citation>
    <scope>NUCLEOTIDE SEQUENCE [LARGE SCALE GENOMIC DNA]</scope>
    <source>
        <strain>IP 31758</strain>
    </source>
</reference>
<keyword id="KW-0235">DNA replication</keyword>
<proteinExistence type="inferred from homology"/>
<protein>
    <recommendedName>
        <fullName evidence="1">DnaA initiator-associating protein DiaA</fullName>
    </recommendedName>
</protein>
<sequence length="196" mass="20939">MLERIKGCFTESIQTQIAAAEALPDAISCAAMALVQSLLNGNKILCCGNGTSAANAQHFAASMINRFETERPSLPAIALNADNVVLTAITNDRLHDEVYAKQVRALGQAGDVLLAISTRGNSRDIVKAVEAAVTRDMTIVALTGYDGGELAGLLGQLDVEIRIPSHRGARVQELHMLTVNCLCDLIDNTLFPHQDD</sequence>
<accession>A7FDY8</accession>
<name>DIAA_YERP3</name>
<comment type="function">
    <text evidence="1">Required for the timely initiation of chromosomal replication via direct interactions with the DnaA initiator protein.</text>
</comment>
<comment type="subunit">
    <text evidence="1">Homotetramer; dimer of dimers.</text>
</comment>
<comment type="similarity">
    <text evidence="1">Belongs to the SIS family. DiaA subfamily.</text>
</comment>
<evidence type="ECO:0000255" key="1">
    <source>
        <dbReference type="HAMAP-Rule" id="MF_01157"/>
    </source>
</evidence>
<organism>
    <name type="scientific">Yersinia pseudotuberculosis serotype O:1b (strain IP 31758)</name>
    <dbReference type="NCBI Taxonomy" id="349747"/>
    <lineage>
        <taxon>Bacteria</taxon>
        <taxon>Pseudomonadati</taxon>
        <taxon>Pseudomonadota</taxon>
        <taxon>Gammaproteobacteria</taxon>
        <taxon>Enterobacterales</taxon>
        <taxon>Yersiniaceae</taxon>
        <taxon>Yersinia</taxon>
    </lineage>
</organism>
<feature type="chain" id="PRO_1000065554" description="DnaA initiator-associating protein DiaA">
    <location>
        <begin position="1"/>
        <end position="196"/>
    </location>
</feature>
<feature type="domain" description="SIS" evidence="1">
    <location>
        <begin position="34"/>
        <end position="196"/>
    </location>
</feature>